<proteinExistence type="evidence at transcript level"/>
<protein>
    <recommendedName>
        <fullName>Cyclin-G1</fullName>
        <shortName>Cyclin-G</shortName>
    </recommendedName>
</protein>
<accession>P51945</accession>
<accession>O54779</accession>
<organism>
    <name type="scientific">Mus musculus</name>
    <name type="common">Mouse</name>
    <dbReference type="NCBI Taxonomy" id="10090"/>
    <lineage>
        <taxon>Eukaryota</taxon>
        <taxon>Metazoa</taxon>
        <taxon>Chordata</taxon>
        <taxon>Craniata</taxon>
        <taxon>Vertebrata</taxon>
        <taxon>Euteleostomi</taxon>
        <taxon>Mammalia</taxon>
        <taxon>Eutheria</taxon>
        <taxon>Euarchontoglires</taxon>
        <taxon>Glires</taxon>
        <taxon>Rodentia</taxon>
        <taxon>Myomorpha</taxon>
        <taxon>Muroidea</taxon>
        <taxon>Muridae</taxon>
        <taxon>Murinae</taxon>
        <taxon>Mus</taxon>
        <taxon>Mus</taxon>
    </lineage>
</organism>
<gene>
    <name type="primary">Ccng1</name>
    <name type="synonym">Ccng</name>
</gene>
<reference key="1">
    <citation type="journal article" date="1996" name="J. Biol. Chem.">
        <title>Cyclin G1 and cyclin G2 comprise a new family of cyclins with contrasting tissue-specific and cell cycle-regulated expression.</title>
        <authorList>
            <person name="Horne M.C."/>
            <person name="Goolsby G.L."/>
            <person name="Donaldson K.L."/>
            <person name="Tran D."/>
            <person name="Neubauer M.G."/>
            <person name="Wahl A.F."/>
        </authorList>
    </citation>
    <scope>NUCLEOTIDE SEQUENCE [MRNA]</scope>
    <source>
        <tissue>Blood</tissue>
    </source>
</reference>
<reference key="2">
    <citation type="journal article" date="1994" name="EMBO J.">
        <title>Cyclin G is a transcriptional target of the p53 tumor suppressor protein.</title>
        <authorList>
            <person name="Okamoto K."/>
            <person name="Beach D."/>
        </authorList>
    </citation>
    <scope>NUCLEOTIDE SEQUENCE [MRNA] OF 46-294</scope>
</reference>
<reference key="3">
    <citation type="journal article" date="1997" name="Genomics">
        <title>Genomic structure and chromosomal localization of mouse cyclin G1 gene.</title>
        <authorList>
            <person name="Kimura S.H."/>
            <person name="Kataoka T.R."/>
            <person name="Endo Y."/>
            <person name="Nojima H."/>
        </authorList>
    </citation>
    <scope>NUCLEOTIDE SEQUENCE [GENOMIC DNA]</scope>
    <source>
        <strain>129</strain>
    </source>
</reference>
<reference key="4">
    <citation type="journal article" date="1996" name="Mol. Cell. Biol.">
        <title>p53-dependent association between cyclin G and the B' subunit of protein phosphatase 2A.</title>
        <authorList>
            <person name="Okamoto K."/>
            <person name="Kamibayashi C."/>
            <person name="Serrano M."/>
            <person name="Prives C."/>
            <person name="Mumby M.C."/>
            <person name="Beach D."/>
        </authorList>
    </citation>
    <scope>FUNCTION</scope>
</reference>
<reference key="5">
    <citation type="journal article" date="1998" name="Hepatology">
        <title>Regulation of cyclin G1 during murine hepatic regeneration following Dipin-induced DNA damage.</title>
        <authorList>
            <person name="Jensen M.R."/>
            <person name="Factor V.M."/>
            <person name="Thorgeirsson S.S."/>
        </authorList>
    </citation>
    <scope>FUNCTION</scope>
    <scope>SUBCELLULAR LOCATION</scope>
</reference>
<feature type="chain" id="PRO_0000080466" description="Cyclin-G1">
    <location>
        <begin position="1"/>
        <end position="294"/>
    </location>
</feature>
<feature type="sequence conflict" description="In Ref. 3; BAA24492." evidence="3" ref="3">
    <original>D</original>
    <variation>G</variation>
    <location>
        <position position="175"/>
    </location>
</feature>
<feature type="sequence conflict" description="In Ref. 3; BAA24492." evidence="3" ref="3">
    <original>IIFSKAK</original>
    <variation>SYFLRQ</variation>
    <location>
        <begin position="192"/>
        <end position="198"/>
    </location>
</feature>
<name>CCNG1_MOUSE</name>
<comment type="function">
    <text evidence="1 2">May play a role in growth regulation. Is associated with G2/M phase arrest in response to DNA damage. May be an intermediate by which p53 mediates its role as an inhibitor of cellular proliferation.</text>
</comment>
<comment type="subunit">
    <text>Binds to B' regulatory B subunits of protein phosphatase A (PP2A) following induction by p53 (in vitro).</text>
</comment>
<comment type="subcellular location">
    <subcellularLocation>
        <location evidence="2">Nucleus</location>
    </subcellularLocation>
</comment>
<comment type="tissue specificity">
    <text>Highest levels in kidney, heart and skeletal muscle.</text>
</comment>
<comment type="similarity">
    <text evidence="3">Belongs to the cyclin family. Cyclin G subfamily.</text>
</comment>
<dbReference type="EMBL" id="L49507">
    <property type="protein sequence ID" value="AAC42082.1"/>
    <property type="molecule type" value="mRNA"/>
</dbReference>
<dbReference type="EMBL" id="Z37110">
    <property type="protein sequence ID" value="CAA85474.1"/>
    <property type="molecule type" value="mRNA"/>
</dbReference>
<dbReference type="EMBL" id="AB005559">
    <property type="protein sequence ID" value="BAA24492.1"/>
    <property type="molecule type" value="Genomic_DNA"/>
</dbReference>
<dbReference type="CCDS" id="CCDS24550.1"/>
<dbReference type="PIR" id="S51621">
    <property type="entry name" value="S51621"/>
</dbReference>
<dbReference type="RefSeq" id="NP_033961.1">
    <property type="nucleotide sequence ID" value="NM_009831.3"/>
</dbReference>
<dbReference type="SMR" id="P51945"/>
<dbReference type="BioGRID" id="198555">
    <property type="interactions" value="5"/>
</dbReference>
<dbReference type="DIP" id="DIP-24179N"/>
<dbReference type="FunCoup" id="P51945">
    <property type="interactions" value="1619"/>
</dbReference>
<dbReference type="STRING" id="10090.ENSMUSP00000020576"/>
<dbReference type="iPTMnet" id="P51945"/>
<dbReference type="PhosphoSitePlus" id="P51945"/>
<dbReference type="PaxDb" id="10090-ENSMUSP00000020576"/>
<dbReference type="PeptideAtlas" id="P51945"/>
<dbReference type="ProteomicsDB" id="280016"/>
<dbReference type="Antibodypedia" id="28603">
    <property type="antibodies" value="306 antibodies from 30 providers"/>
</dbReference>
<dbReference type="DNASU" id="12450"/>
<dbReference type="Ensembl" id="ENSMUST00000020576.8">
    <property type="protein sequence ID" value="ENSMUSP00000020576.8"/>
    <property type="gene ID" value="ENSMUSG00000020326.8"/>
</dbReference>
<dbReference type="GeneID" id="12450"/>
<dbReference type="KEGG" id="mmu:12450"/>
<dbReference type="UCSC" id="uc007ilz.1">
    <property type="organism name" value="mouse"/>
</dbReference>
<dbReference type="AGR" id="MGI:102890"/>
<dbReference type="CTD" id="900"/>
<dbReference type="MGI" id="MGI:102890">
    <property type="gene designation" value="Ccng1"/>
</dbReference>
<dbReference type="VEuPathDB" id="HostDB:ENSMUSG00000020326"/>
<dbReference type="eggNOG" id="KOG0653">
    <property type="taxonomic scope" value="Eukaryota"/>
</dbReference>
<dbReference type="GeneTree" id="ENSGT00940000154726"/>
<dbReference type="HOGENOM" id="CLU_062642_0_0_1"/>
<dbReference type="InParanoid" id="P51945"/>
<dbReference type="OMA" id="CFEAQEE"/>
<dbReference type="OrthoDB" id="769138at2759"/>
<dbReference type="PhylomeDB" id="P51945"/>
<dbReference type="TreeFam" id="TF101007"/>
<dbReference type="Reactome" id="R-MMU-6804757">
    <property type="pathway name" value="Regulation of TP53 Degradation"/>
</dbReference>
<dbReference type="BioGRID-ORCS" id="12450">
    <property type="hits" value="3 hits in 78 CRISPR screens"/>
</dbReference>
<dbReference type="ChiTaRS" id="Ccng1">
    <property type="organism name" value="mouse"/>
</dbReference>
<dbReference type="PRO" id="PR:P51945"/>
<dbReference type="Proteomes" id="UP000000589">
    <property type="component" value="Chromosome 11"/>
</dbReference>
<dbReference type="RNAct" id="P51945">
    <property type="molecule type" value="protein"/>
</dbReference>
<dbReference type="Bgee" id="ENSMUSG00000020326">
    <property type="expression patterns" value="Expressed in intercostal muscle and 256 other cell types or tissues"/>
</dbReference>
<dbReference type="ExpressionAtlas" id="P51945">
    <property type="expression patterns" value="baseline and differential"/>
</dbReference>
<dbReference type="GO" id="GO:0005634">
    <property type="term" value="C:nucleus"/>
    <property type="evidence" value="ECO:0007669"/>
    <property type="project" value="UniProtKB-SubCell"/>
</dbReference>
<dbReference type="GO" id="GO:0051301">
    <property type="term" value="P:cell division"/>
    <property type="evidence" value="ECO:0007669"/>
    <property type="project" value="UniProtKB-KW"/>
</dbReference>
<dbReference type="CDD" id="cd20583">
    <property type="entry name" value="CYCLIN_CCNG1"/>
    <property type="match status" value="1"/>
</dbReference>
<dbReference type="FunFam" id="1.10.472.10:FF:000006">
    <property type="entry name" value="Cyclin I"/>
    <property type="match status" value="1"/>
</dbReference>
<dbReference type="Gene3D" id="1.10.472.10">
    <property type="entry name" value="Cyclin-like"/>
    <property type="match status" value="2"/>
</dbReference>
<dbReference type="InterPro" id="IPR039361">
    <property type="entry name" value="Cyclin"/>
</dbReference>
<dbReference type="InterPro" id="IPR013763">
    <property type="entry name" value="Cyclin-like_dom"/>
</dbReference>
<dbReference type="InterPro" id="IPR036915">
    <property type="entry name" value="Cyclin-like_sf"/>
</dbReference>
<dbReference type="InterPro" id="IPR006671">
    <property type="entry name" value="Cyclin_N"/>
</dbReference>
<dbReference type="PANTHER" id="PTHR10177">
    <property type="entry name" value="CYCLINS"/>
    <property type="match status" value="1"/>
</dbReference>
<dbReference type="Pfam" id="PF00134">
    <property type="entry name" value="Cyclin_N"/>
    <property type="match status" value="1"/>
</dbReference>
<dbReference type="SMART" id="SM00385">
    <property type="entry name" value="CYCLIN"/>
    <property type="match status" value="1"/>
</dbReference>
<dbReference type="SUPFAM" id="SSF47954">
    <property type="entry name" value="Cyclin-like"/>
    <property type="match status" value="1"/>
</dbReference>
<evidence type="ECO:0000269" key="1">
    <source>
    </source>
</evidence>
<evidence type="ECO:0000269" key="2">
    <source>
    </source>
</evidence>
<evidence type="ECO:0000305" key="3"/>
<keyword id="KW-0131">Cell cycle</keyword>
<keyword id="KW-0132">Cell division</keyword>
<keyword id="KW-0195">Cyclin</keyword>
<keyword id="KW-0498">Mitosis</keyword>
<keyword id="KW-0539">Nucleus</keyword>
<keyword id="KW-1185">Reference proteome</keyword>
<sequence length="294" mass="33903">MIEVLTTDSQKLLHQLNTLLEQESRCQPKVCGLKLIESAHDNGLRMTARLRDFEVKDLLSLTQFFGFDTETFSLAVNLLDRFLSKMKVQAKHLGCVGLSCFYLAVKATEEERNVPLATDLIRISQYRFTVSDLMRMEKIVLEKVCWKVKATTAFQFLQLYYSLVHDTLPFERRNDLNFERLEAQLKACHCRIIFSKAKPSVLALSILALEIQALKYVELTEGVECIQKHSKISGRDLTFWQELVSKCLTEYSSNKCSKPNGQKLKWIVSGRTARQLKHSYYRITHLPTIPETIC</sequence>